<evidence type="ECO:0000269" key="1">
    <source>
    </source>
</evidence>
<evidence type="ECO:0000303" key="2">
    <source>
    </source>
</evidence>
<evidence type="ECO:0000305" key="3"/>
<proteinExistence type="evidence at protein level"/>
<dbReference type="SMR" id="C0HKC5"/>
<dbReference type="GO" id="GO:0032991">
    <property type="term" value="C:protein-containing complex"/>
    <property type="evidence" value="ECO:0000314"/>
    <property type="project" value="UniProtKB"/>
</dbReference>
<dbReference type="GO" id="GO:0008061">
    <property type="term" value="F:chitin binding"/>
    <property type="evidence" value="ECO:0007669"/>
    <property type="project" value="UniProtKB-KW"/>
</dbReference>
<dbReference type="GO" id="GO:0042802">
    <property type="term" value="F:identical protein binding"/>
    <property type="evidence" value="ECO:0000353"/>
    <property type="project" value="UniProtKB"/>
</dbReference>
<dbReference type="GO" id="GO:0050832">
    <property type="term" value="P:defense response to fungus"/>
    <property type="evidence" value="ECO:0000314"/>
    <property type="project" value="UniProtKB"/>
</dbReference>
<dbReference type="GO" id="GO:0140975">
    <property type="term" value="P:disruption of cellular anatomical structure in another organism"/>
    <property type="evidence" value="ECO:0000314"/>
    <property type="project" value="UniProtKB"/>
</dbReference>
<dbReference type="GO" id="GO:0031640">
    <property type="term" value="P:killing of cells of another organism"/>
    <property type="evidence" value="ECO:0007669"/>
    <property type="project" value="UniProtKB-KW"/>
</dbReference>
<dbReference type="Gene3D" id="1.10.110.10">
    <property type="entry name" value="Plant lipid-transfer and hydrophobic proteins"/>
    <property type="match status" value="1"/>
</dbReference>
<dbReference type="InterPro" id="IPR036312">
    <property type="entry name" value="Bifun_inhib/LTP/seed_sf"/>
</dbReference>
<dbReference type="SUPFAM" id="SSF47699">
    <property type="entry name" value="Bifunctional inhibitor/lipid-transfer protein/seed storage 2S albumin"/>
    <property type="match status" value="1"/>
</dbReference>
<sequence>QPDFQRCPSLRCCQQLRQAVQLTHQQQGQVGPQQVRQQFQTHQRIPAICNLQPMRQAVQLAHQQQQGQVGPQQVRCCQQLRQAVQSQAAAAGQVGPQQVGHMYR</sequence>
<name>CBP2_MOROL</name>
<organism evidence="2">
    <name type="scientific">Moringa oleifera</name>
    <name type="common">Horseradish tree</name>
    <name type="synonym">Moringa pterygosperma</name>
    <dbReference type="NCBI Taxonomy" id="3735"/>
    <lineage>
        <taxon>Eukaryota</taxon>
        <taxon>Viridiplantae</taxon>
        <taxon>Streptophyta</taxon>
        <taxon>Embryophyta</taxon>
        <taxon>Tracheophyta</taxon>
        <taxon>Spermatophyta</taxon>
        <taxon>Magnoliopsida</taxon>
        <taxon>eudicotyledons</taxon>
        <taxon>Gunneridae</taxon>
        <taxon>Pentapetalae</taxon>
        <taxon>rosids</taxon>
        <taxon>malvids</taxon>
        <taxon>Brassicales</taxon>
        <taxon>Moringaceae</taxon>
        <taxon>Moringa</taxon>
    </lineage>
</organism>
<feature type="chain" id="PRO_0000439085" description="Chitin-binding protein 2" evidence="1">
    <location>
        <begin position="1"/>
        <end position="104"/>
    </location>
</feature>
<feature type="non-consecutive residues" evidence="2">
    <location>
        <begin position="6"/>
        <end position="7"/>
    </location>
</feature>
<feature type="non-consecutive residues" evidence="2">
    <location>
        <begin position="11"/>
        <end position="12"/>
    </location>
</feature>
<feature type="non-consecutive residues" evidence="2">
    <location>
        <begin position="17"/>
        <end position="18"/>
    </location>
</feature>
<feature type="non-consecutive residues" evidence="2">
    <location>
        <begin position="36"/>
        <end position="37"/>
    </location>
</feature>
<feature type="non-consecutive residues" evidence="2">
    <location>
        <begin position="44"/>
        <end position="45"/>
    </location>
</feature>
<feature type="non-consecutive residues" evidence="2">
    <location>
        <begin position="55"/>
        <end position="56"/>
    </location>
</feature>
<feature type="non-consecutive residues" evidence="2">
    <location>
        <begin position="75"/>
        <end position="76"/>
    </location>
</feature>
<feature type="non-consecutive residues" evidence="2">
    <location>
        <begin position="81"/>
        <end position="82"/>
    </location>
</feature>
<feature type="non-terminal residue" evidence="2">
    <location>
        <position position="1"/>
    </location>
</feature>
<feature type="non-terminal residue" evidence="2">
    <location>
        <position position="104"/>
    </location>
</feature>
<reference evidence="3" key="1">
    <citation type="journal article" date="2017" name="Front. Microbiol.">
        <title>A Chitin-binding Protein Purified from Moringa oleifera Seeds Presents Anticandidal Activity by Increasing Cell Membrane Permeability and Reactive Oxygen Species Production.</title>
        <authorList>
            <person name="Neto J.X.S."/>
            <person name="Pereira M.L."/>
            <person name="Oliveira J.T.A."/>
            <person name="Rocha-Bezerra L.C.B."/>
            <person name="Lopes T.D.P."/>
            <person name="Costa H.P.S."/>
            <person name="Sousa D.O.B."/>
            <person name="Rocha B.A.M."/>
            <person name="Grangeiro T.B."/>
            <person name="Freire J.E.C."/>
            <person name="Monteiro-Moreira A.C.O."/>
            <person name="Lobo M.D.P."/>
            <person name="Brilhante R.S.N."/>
            <person name="Vasconcelos I.M."/>
        </authorList>
    </citation>
    <scope>PROTEIN SEQUENCE</scope>
    <scope>FUNCTION</scope>
    <scope>SUBUNIT</scope>
    <scope>GLYCOSYLATION</scope>
    <scope>MASS SPECTROMETRY</scope>
    <scope>IDENTIFICATION BY MASS SPECTROMETRY</scope>
    <source>
        <tissue evidence="2">Seed</tissue>
    </source>
</reference>
<comment type="function">
    <text evidence="1">Chitin-binding protein. Has antifungal activity against C.krusei, C.albicans, C.tropicalis and C.parapsilosis. Inhibits C.albicans by increasing cell membrane permeability and production of reactive oxygen species. Has no hemagglutinating activity.</text>
</comment>
<comment type="subunit">
    <text evidence="1">Oligomer in an unreduced state.</text>
</comment>
<comment type="PTM">
    <text evidence="1">Glycosylated.</text>
</comment>
<comment type="mass spectrometry"/>
<comment type="caution">
    <text evidence="3">The order of the peptides shown is unknown.</text>
</comment>
<accession>C0HKC5</accession>
<keyword id="KW-0929">Antimicrobial</keyword>
<keyword id="KW-0147">Chitin-binding</keyword>
<keyword id="KW-0903">Direct protein sequencing</keyword>
<keyword id="KW-0295">Fungicide</keyword>
<keyword id="KW-0325">Glycoprotein</keyword>
<protein>
    <recommendedName>
        <fullName evidence="2">Chitin-binding protein 2</fullName>
        <shortName evidence="2">Mo-CBP2</shortName>
    </recommendedName>
</protein>